<proteinExistence type="inferred from homology"/>
<gene>
    <name evidence="1" type="primary">tpiA</name>
    <name type="ordered locus">VC_2670</name>
</gene>
<evidence type="ECO:0000255" key="1">
    <source>
        <dbReference type="HAMAP-Rule" id="MF_00147"/>
    </source>
</evidence>
<evidence type="ECO:0000305" key="2"/>
<accession>Q9KNR1</accession>
<protein>
    <recommendedName>
        <fullName evidence="1">Triosephosphate isomerase</fullName>
        <shortName evidence="1">TIM</shortName>
        <shortName evidence="1">TPI</shortName>
        <ecNumber evidence="1">5.3.1.1</ecNumber>
    </recommendedName>
    <alternativeName>
        <fullName evidence="1">Triose-phosphate isomerase</fullName>
    </alternativeName>
</protein>
<feature type="chain" id="PRO_0000090312" description="Triosephosphate isomerase">
    <location>
        <begin position="1"/>
        <end position="257"/>
    </location>
</feature>
<feature type="active site" description="Electrophile" evidence="1">
    <location>
        <position position="97"/>
    </location>
</feature>
<feature type="active site" description="Proton acceptor" evidence="1">
    <location>
        <position position="169"/>
    </location>
</feature>
<feature type="binding site" evidence="1">
    <location>
        <begin position="9"/>
        <end position="11"/>
    </location>
    <ligand>
        <name>substrate</name>
    </ligand>
</feature>
<feature type="binding site" evidence="1">
    <location>
        <position position="175"/>
    </location>
    <ligand>
        <name>substrate</name>
    </ligand>
</feature>
<feature type="binding site" evidence="1">
    <location>
        <position position="214"/>
    </location>
    <ligand>
        <name>substrate</name>
    </ligand>
</feature>
<feature type="binding site" evidence="1">
    <location>
        <begin position="235"/>
        <end position="236"/>
    </location>
    <ligand>
        <name>substrate</name>
    </ligand>
</feature>
<keyword id="KW-0963">Cytoplasm</keyword>
<keyword id="KW-0312">Gluconeogenesis</keyword>
<keyword id="KW-0324">Glycolysis</keyword>
<keyword id="KW-0413">Isomerase</keyword>
<keyword id="KW-1185">Reference proteome</keyword>
<dbReference type="EC" id="5.3.1.1" evidence="1"/>
<dbReference type="EMBL" id="AE003852">
    <property type="protein sequence ID" value="AAF95811.1"/>
    <property type="status" value="ALT_INIT"/>
    <property type="molecule type" value="Genomic_DNA"/>
</dbReference>
<dbReference type="PIR" id="H82048">
    <property type="entry name" value="H82048"/>
</dbReference>
<dbReference type="RefSeq" id="NP_232298.1">
    <property type="nucleotide sequence ID" value="NC_002505.1"/>
</dbReference>
<dbReference type="RefSeq" id="WP_001254176.1">
    <property type="nucleotide sequence ID" value="NZ_LT906614.1"/>
</dbReference>
<dbReference type="SMR" id="Q9KNR1"/>
<dbReference type="STRING" id="243277.VC_2670"/>
<dbReference type="DNASU" id="2615498"/>
<dbReference type="EnsemblBacteria" id="AAF95811">
    <property type="protein sequence ID" value="AAF95811"/>
    <property type="gene ID" value="VC_2670"/>
</dbReference>
<dbReference type="KEGG" id="vch:VC_2670"/>
<dbReference type="PATRIC" id="fig|243277.26.peg.2545"/>
<dbReference type="eggNOG" id="COG0149">
    <property type="taxonomic scope" value="Bacteria"/>
</dbReference>
<dbReference type="HOGENOM" id="CLU_024251_2_3_6"/>
<dbReference type="UniPathway" id="UPA00109">
    <property type="reaction ID" value="UER00189"/>
</dbReference>
<dbReference type="UniPathway" id="UPA00138"/>
<dbReference type="Proteomes" id="UP000000584">
    <property type="component" value="Chromosome 1"/>
</dbReference>
<dbReference type="GO" id="GO:0005829">
    <property type="term" value="C:cytosol"/>
    <property type="evidence" value="ECO:0000318"/>
    <property type="project" value="GO_Central"/>
</dbReference>
<dbReference type="GO" id="GO:0004807">
    <property type="term" value="F:triose-phosphate isomerase activity"/>
    <property type="evidence" value="ECO:0000318"/>
    <property type="project" value="GO_Central"/>
</dbReference>
<dbReference type="GO" id="GO:0006094">
    <property type="term" value="P:gluconeogenesis"/>
    <property type="evidence" value="ECO:0000318"/>
    <property type="project" value="GO_Central"/>
</dbReference>
<dbReference type="GO" id="GO:0046166">
    <property type="term" value="P:glyceraldehyde-3-phosphate biosynthetic process"/>
    <property type="evidence" value="ECO:0000318"/>
    <property type="project" value="GO_Central"/>
</dbReference>
<dbReference type="GO" id="GO:0019563">
    <property type="term" value="P:glycerol catabolic process"/>
    <property type="evidence" value="ECO:0000318"/>
    <property type="project" value="GO_Central"/>
</dbReference>
<dbReference type="GO" id="GO:0006096">
    <property type="term" value="P:glycolytic process"/>
    <property type="evidence" value="ECO:0000318"/>
    <property type="project" value="GO_Central"/>
</dbReference>
<dbReference type="CDD" id="cd00311">
    <property type="entry name" value="TIM"/>
    <property type="match status" value="1"/>
</dbReference>
<dbReference type="FunFam" id="3.20.20.70:FF:000020">
    <property type="entry name" value="Triosephosphate isomerase"/>
    <property type="match status" value="1"/>
</dbReference>
<dbReference type="Gene3D" id="3.20.20.70">
    <property type="entry name" value="Aldolase class I"/>
    <property type="match status" value="1"/>
</dbReference>
<dbReference type="HAMAP" id="MF_00147_B">
    <property type="entry name" value="TIM_B"/>
    <property type="match status" value="1"/>
</dbReference>
<dbReference type="InterPro" id="IPR013785">
    <property type="entry name" value="Aldolase_TIM"/>
</dbReference>
<dbReference type="InterPro" id="IPR035990">
    <property type="entry name" value="TIM_sf"/>
</dbReference>
<dbReference type="InterPro" id="IPR022896">
    <property type="entry name" value="TrioseP_Isoase_bac/euk"/>
</dbReference>
<dbReference type="InterPro" id="IPR000652">
    <property type="entry name" value="Triosephosphate_isomerase"/>
</dbReference>
<dbReference type="InterPro" id="IPR020861">
    <property type="entry name" value="Triosephosphate_isomerase_AS"/>
</dbReference>
<dbReference type="NCBIfam" id="TIGR00419">
    <property type="entry name" value="tim"/>
    <property type="match status" value="1"/>
</dbReference>
<dbReference type="PANTHER" id="PTHR21139">
    <property type="entry name" value="TRIOSEPHOSPHATE ISOMERASE"/>
    <property type="match status" value="1"/>
</dbReference>
<dbReference type="PANTHER" id="PTHR21139:SF42">
    <property type="entry name" value="TRIOSEPHOSPHATE ISOMERASE"/>
    <property type="match status" value="1"/>
</dbReference>
<dbReference type="Pfam" id="PF00121">
    <property type="entry name" value="TIM"/>
    <property type="match status" value="1"/>
</dbReference>
<dbReference type="SUPFAM" id="SSF51351">
    <property type="entry name" value="Triosephosphate isomerase (TIM)"/>
    <property type="match status" value="1"/>
</dbReference>
<dbReference type="PROSITE" id="PS00171">
    <property type="entry name" value="TIM_1"/>
    <property type="match status" value="1"/>
</dbReference>
<dbReference type="PROSITE" id="PS51440">
    <property type="entry name" value="TIM_2"/>
    <property type="match status" value="1"/>
</dbReference>
<reference key="1">
    <citation type="journal article" date="2000" name="Nature">
        <title>DNA sequence of both chromosomes of the cholera pathogen Vibrio cholerae.</title>
        <authorList>
            <person name="Heidelberg J.F."/>
            <person name="Eisen J.A."/>
            <person name="Nelson W.C."/>
            <person name="Clayton R.A."/>
            <person name="Gwinn M.L."/>
            <person name="Dodson R.J."/>
            <person name="Haft D.H."/>
            <person name="Hickey E.K."/>
            <person name="Peterson J.D."/>
            <person name="Umayam L.A."/>
            <person name="Gill S.R."/>
            <person name="Nelson K.E."/>
            <person name="Read T.D."/>
            <person name="Tettelin H."/>
            <person name="Richardson D.L."/>
            <person name="Ermolaeva M.D."/>
            <person name="Vamathevan J.J."/>
            <person name="Bass S."/>
            <person name="Qin H."/>
            <person name="Dragoi I."/>
            <person name="Sellers P."/>
            <person name="McDonald L.A."/>
            <person name="Utterback T.R."/>
            <person name="Fleischmann R.D."/>
            <person name="Nierman W.C."/>
            <person name="White O."/>
            <person name="Salzberg S.L."/>
            <person name="Smith H.O."/>
            <person name="Colwell R.R."/>
            <person name="Mekalanos J.J."/>
            <person name="Venter J.C."/>
            <person name="Fraser C.M."/>
        </authorList>
    </citation>
    <scope>NUCLEOTIDE SEQUENCE [LARGE SCALE GENOMIC DNA]</scope>
    <source>
        <strain>ATCC 39315 / El Tor Inaba N16961</strain>
    </source>
</reference>
<organism>
    <name type="scientific">Vibrio cholerae serotype O1 (strain ATCC 39315 / El Tor Inaba N16961)</name>
    <dbReference type="NCBI Taxonomy" id="243277"/>
    <lineage>
        <taxon>Bacteria</taxon>
        <taxon>Pseudomonadati</taxon>
        <taxon>Pseudomonadota</taxon>
        <taxon>Gammaproteobacteria</taxon>
        <taxon>Vibrionales</taxon>
        <taxon>Vibrionaceae</taxon>
        <taxon>Vibrio</taxon>
    </lineage>
</organism>
<name>TPIS_VIBCH</name>
<sequence length="257" mass="27001">MRRPVVMGNWKLNGSKAMVTDLLNGLNAELEGVEGVDVVVAPPAMYLDLAERLIKEGGNKLILGAQNTDTHNSGAYTGDMSPAMLKDFGASHIIIGHSERRDYHKESDEFVAKKFAFLKENGLTPVFCIGETEAQNEAGETEAVCARQINAVIDAYGVEALNGAIIAYEPIWAIGTGKAATADDAQRIHASIRALIAAKDAAVAEQVIIQYGGSVKPENAASYFAQPDIDGALVGGASLDAKGFAAIAKAAAEAKKA</sequence>
<comment type="function">
    <text evidence="1">Involved in the gluconeogenesis. Catalyzes stereospecifically the conversion of dihydroxyacetone phosphate (DHAP) to D-glyceraldehyde-3-phosphate (G3P).</text>
</comment>
<comment type="catalytic activity">
    <reaction evidence="1">
        <text>D-glyceraldehyde 3-phosphate = dihydroxyacetone phosphate</text>
        <dbReference type="Rhea" id="RHEA:18585"/>
        <dbReference type="ChEBI" id="CHEBI:57642"/>
        <dbReference type="ChEBI" id="CHEBI:59776"/>
        <dbReference type="EC" id="5.3.1.1"/>
    </reaction>
</comment>
<comment type="pathway">
    <text evidence="1">Carbohydrate biosynthesis; gluconeogenesis.</text>
</comment>
<comment type="pathway">
    <text evidence="1">Carbohydrate degradation; glycolysis; D-glyceraldehyde 3-phosphate from glycerone phosphate: step 1/1.</text>
</comment>
<comment type="subunit">
    <text evidence="1">Homodimer.</text>
</comment>
<comment type="subcellular location">
    <subcellularLocation>
        <location evidence="1">Cytoplasm</location>
    </subcellularLocation>
</comment>
<comment type="similarity">
    <text evidence="1">Belongs to the triosephosphate isomerase family.</text>
</comment>
<comment type="sequence caution" evidence="2">
    <conflict type="erroneous initiation">
        <sequence resource="EMBL-CDS" id="AAF95811"/>
    </conflict>
</comment>